<feature type="signal peptide" evidence="1">
    <location>
        <begin position="1"/>
        <end position="29"/>
    </location>
</feature>
<feature type="chain" id="PRO_0000240663" description="Protocadherin alpha-4">
    <location>
        <begin position="30"/>
        <end position="947"/>
    </location>
</feature>
<feature type="topological domain" description="Extracellular" evidence="12">
    <location>
        <begin position="30"/>
        <end position="697"/>
    </location>
</feature>
<feature type="transmembrane region" description="Helical" evidence="1">
    <location>
        <begin position="698"/>
        <end position="718"/>
    </location>
</feature>
<feature type="topological domain" description="Cytoplasmic" evidence="13">
    <location>
        <begin position="719"/>
        <end position="947"/>
    </location>
</feature>
<feature type="domain" description="Cadherin 1" evidence="2">
    <location>
        <begin position="30"/>
        <end position="133"/>
    </location>
</feature>
<feature type="domain" description="Cadherin 2" evidence="2">
    <location>
        <begin position="134"/>
        <end position="242"/>
    </location>
</feature>
<feature type="domain" description="Cadherin 3" evidence="2">
    <location>
        <begin position="243"/>
        <end position="350"/>
    </location>
</feature>
<feature type="domain" description="Cadherin 4" evidence="2">
    <location>
        <begin position="351"/>
        <end position="455"/>
    </location>
</feature>
<feature type="domain" description="Cadherin 5" evidence="2">
    <location>
        <begin position="456"/>
        <end position="565"/>
    </location>
</feature>
<feature type="domain" description="Cadherin 6" evidence="2">
    <location>
        <begin position="573"/>
        <end position="681"/>
    </location>
</feature>
<feature type="repeat" description="PXXP 1">
    <location>
        <begin position="734"/>
        <end position="737"/>
    </location>
</feature>
<feature type="repeat" description="PXXP 2">
    <location>
        <begin position="774"/>
        <end position="777"/>
    </location>
</feature>
<feature type="repeat" description="PXXP 3">
    <location>
        <begin position="796"/>
        <end position="799"/>
    </location>
</feature>
<feature type="repeat" description="PXXP 4">
    <location>
        <begin position="829"/>
        <end position="832"/>
    </location>
</feature>
<feature type="repeat" description="PXXP 5">
    <location>
        <begin position="870"/>
        <end position="873"/>
    </location>
</feature>
<feature type="repeat" description="PXXP 6">
    <location>
        <begin position="888"/>
        <end position="891"/>
    </location>
</feature>
<feature type="region of interest" description="6 X 4 AA repeats of P-X-X-P">
    <location>
        <begin position="734"/>
        <end position="891"/>
    </location>
</feature>
<feature type="region of interest" description="Required for interaction with FYN" evidence="7">
    <location>
        <begin position="738"/>
        <end position="947"/>
    </location>
</feature>
<feature type="region of interest" description="Disordered" evidence="4">
    <location>
        <begin position="761"/>
        <end position="805"/>
    </location>
</feature>
<feature type="region of interest" description="Disordered" evidence="4">
    <location>
        <begin position="824"/>
        <end position="853"/>
    </location>
</feature>
<feature type="region of interest" description="Disordered" evidence="4">
    <location>
        <begin position="891"/>
        <end position="947"/>
    </location>
</feature>
<feature type="compositionally biased region" description="Basic and acidic residues" evidence="4">
    <location>
        <begin position="906"/>
        <end position="920"/>
    </location>
</feature>
<feature type="glycosylation site" description="N-linked (GlcNAc...) asparagine" evidence="3">
    <location>
        <position position="257"/>
    </location>
</feature>
<feature type="glycosylation site" description="N-linked (GlcNAc...) asparagine" evidence="6 16">
    <location>
        <position position="265"/>
    </location>
</feature>
<feature type="glycosylation site" description="O-linked (Man) threonine" evidence="6 16">
    <location>
        <position position="438"/>
    </location>
</feature>
<feature type="glycosylation site" description="O-linked (Man) serine" evidence="6 16">
    <location>
        <position position="440"/>
    </location>
</feature>
<feature type="glycosylation site" description="O-linked (Man) serine" evidence="6 16">
    <location>
        <position position="442"/>
    </location>
</feature>
<feature type="glycosylation site" description="N-linked (GlcNAc...) asparagine" evidence="3">
    <location>
        <position position="548"/>
    </location>
</feature>
<feature type="disulfide bond" evidence="5 6 15 16">
    <location>
        <begin position="96"/>
        <end position="102"/>
    </location>
</feature>
<feature type="splice variant" id="VSP_019413" description="In isoform 2." evidence="10">
    <location>
        <begin position="535"/>
        <end position="795"/>
    </location>
</feature>
<feature type="splice variant" id="VSP_019414" description="In isoform 3." evidence="9">
    <original>PRQPNPDWRYSASLRAGMHSSVHLEEAGILRAGPGGPDQQWPTVSSATPEPEAGEVSPPVGAGVNSNSWTFKYGPGNPKQSGPGELPDKFIIPGSPAIISIRQEPANNQIDKSDFITFGKKEETKKKKKKKKGNKTQEKKEKGNSTTDNSDQ</original>
    <variation>QAPPNTDWRFSQAQRPGTSGSQNGDETGTWPNNQFDTEMLQAMILASASEAADGSSTLGGGAGTMGLSARYGPQFTLQHVPDYRQNVYIPGSNATLTNAAGKRDGKAPAGGNGNKKKSGKKEKK</variation>
    <location>
        <begin position="796"/>
        <end position="947"/>
    </location>
</feature>
<feature type="splice variant" id="VSP_019415" description="In isoform 2." evidence="10">
    <original>GELPDKFIIPGSPAIISIRQEPANNQIDKSDFITFGKKEETKKKKKKKKGNKTQEKKEKGNSTTDNSDQ</original>
    <variation>EPKKQTQVSFLPRRKGEASQPRQ</variation>
    <location>
        <begin position="879"/>
        <end position="947"/>
    </location>
</feature>
<feature type="strand" evidence="18">
    <location>
        <begin position="31"/>
        <end position="38"/>
    </location>
</feature>
<feature type="strand" evidence="18">
    <location>
        <begin position="44"/>
        <end position="46"/>
    </location>
</feature>
<feature type="helix" evidence="18">
    <location>
        <begin position="48"/>
        <end position="51"/>
    </location>
</feature>
<feature type="helix" evidence="18">
    <location>
        <begin position="56"/>
        <end position="59"/>
    </location>
</feature>
<feature type="turn" evidence="18">
    <location>
        <begin position="60"/>
        <end position="63"/>
    </location>
</feature>
<feature type="strand" evidence="18">
    <location>
        <begin position="65"/>
        <end position="71"/>
    </location>
</feature>
<feature type="strand" evidence="18">
    <location>
        <begin position="73"/>
        <end position="78"/>
    </location>
</feature>
<feature type="turn" evidence="18">
    <location>
        <begin position="79"/>
        <end position="82"/>
    </location>
</feature>
<feature type="strand" evidence="18">
    <location>
        <begin position="83"/>
        <end position="86"/>
    </location>
</feature>
<feature type="helix" evidence="18">
    <location>
        <begin position="92"/>
        <end position="95"/>
    </location>
</feature>
<feature type="strand" evidence="17">
    <location>
        <begin position="97"/>
        <end position="101"/>
    </location>
</feature>
<feature type="strand" evidence="18">
    <location>
        <begin position="103"/>
        <end position="110"/>
    </location>
</feature>
<feature type="turn" evidence="18">
    <location>
        <begin position="111"/>
        <end position="114"/>
    </location>
</feature>
<feature type="strand" evidence="18">
    <location>
        <begin position="115"/>
        <end position="124"/>
    </location>
</feature>
<feature type="strand" evidence="18">
    <location>
        <begin position="136"/>
        <end position="140"/>
    </location>
</feature>
<feature type="helix" evidence="18">
    <location>
        <begin position="164"/>
        <end position="166"/>
    </location>
</feature>
<feature type="strand" evidence="18">
    <location>
        <begin position="168"/>
        <end position="172"/>
    </location>
</feature>
<feature type="strand" evidence="18">
    <location>
        <begin position="176"/>
        <end position="181"/>
    </location>
</feature>
<feature type="strand" evidence="18">
    <location>
        <begin position="193"/>
        <end position="196"/>
    </location>
</feature>
<feature type="turn" evidence="18">
    <location>
        <begin position="202"/>
        <end position="204"/>
    </location>
</feature>
<feature type="strand" evidence="18">
    <location>
        <begin position="206"/>
        <end position="220"/>
    </location>
</feature>
<feature type="strand" evidence="18">
    <location>
        <begin position="223"/>
        <end position="231"/>
    </location>
</feature>
<feature type="strand" evidence="18">
    <location>
        <begin position="241"/>
        <end position="243"/>
    </location>
</feature>
<feature type="strand" evidence="18">
    <location>
        <begin position="245"/>
        <end position="251"/>
    </location>
</feature>
<feature type="strand" evidence="18">
    <location>
        <begin position="260"/>
        <end position="263"/>
    </location>
</feature>
<feature type="helix" evidence="18">
    <location>
        <begin position="272"/>
        <end position="274"/>
    </location>
</feature>
<feature type="strand" evidence="18">
    <location>
        <begin position="277"/>
        <end position="281"/>
    </location>
</feature>
<feature type="helix" evidence="18">
    <location>
        <begin position="287"/>
        <end position="292"/>
    </location>
</feature>
<feature type="strand" evidence="18">
    <location>
        <begin position="293"/>
        <end position="295"/>
    </location>
</feature>
<feature type="turn" evidence="18">
    <location>
        <begin position="297"/>
        <end position="299"/>
    </location>
</feature>
<feature type="strand" evidence="18">
    <location>
        <begin position="301"/>
        <end position="304"/>
    </location>
</feature>
<feature type="turn" evidence="18">
    <location>
        <begin position="310"/>
        <end position="312"/>
    </location>
</feature>
<feature type="strand" evidence="18">
    <location>
        <begin position="314"/>
        <end position="324"/>
    </location>
</feature>
<feature type="strand" evidence="18">
    <location>
        <begin position="326"/>
        <end position="328"/>
    </location>
</feature>
<feature type="strand" evidence="18">
    <location>
        <begin position="331"/>
        <end position="340"/>
    </location>
</feature>
<feature type="strand" evidence="18">
    <location>
        <begin position="349"/>
        <end position="355"/>
    </location>
</feature>
<feature type="strand" evidence="18">
    <location>
        <begin position="358"/>
        <end position="360"/>
    </location>
</feature>
<feature type="strand" evidence="18">
    <location>
        <begin position="368"/>
        <end position="375"/>
    </location>
</feature>
<feature type="helix" evidence="18">
    <location>
        <begin position="380"/>
        <end position="383"/>
    </location>
</feature>
<feature type="strand" evidence="18">
    <location>
        <begin position="385"/>
        <end position="389"/>
    </location>
</feature>
<feature type="strand" evidence="18">
    <location>
        <begin position="391"/>
        <end position="394"/>
    </location>
</feature>
<feature type="strand" evidence="18">
    <location>
        <begin position="396"/>
        <end position="401"/>
    </location>
</feature>
<feature type="strand" evidence="18">
    <location>
        <begin position="404"/>
        <end position="408"/>
    </location>
</feature>
<feature type="turn" evidence="18">
    <location>
        <begin position="415"/>
        <end position="417"/>
    </location>
</feature>
<feature type="strand" evidence="18">
    <location>
        <begin position="420"/>
        <end position="429"/>
    </location>
</feature>
<feature type="strand" evidence="18">
    <location>
        <begin position="436"/>
        <end position="446"/>
    </location>
</feature>
<name>PCDA4_MOUSE</name>
<sequence length="947" mass="103143">MEFSWGSGQESQRLLLSFLLLAIWEAGNSQIHYSIPEEAKHGTFVGRIAQDLGLELTELVPRLFRVASKDRGDLLEVNLQNGILFVNSRIDREELCGRSAECSIHLEVIVDRPLQVFHVEVEVRDINDNPPRFPTTQKNLFIAESRPLDTWFPLEGASDADIGINAVLTYRLSPNDYFSLEKPSNDERVKGLGLVLRKSLDREETPEIILVLTVTDGGKPELTGSVQLLITVLDANDNAPVFDRSLYTVKLPENVPNGTLVVKVNASDLDEGVNGDIMYSFSTDISPNVKYKFHIDPVSGEIIVKGYIDFEECKSYEILIEGIDKGQLPLSGHCKVIVQVEDINDNVPELEFKSLSLPIRENSPVGTVIALISVSDRDTGVNGQVTCSLTSHVPFKLVSTFKNYYSLVLDSALDRETTADYKVVVTARDGGSPSLWATASVSVEVADVNDNAPVFAQPEYTVFVKENNPPGAHIFTVSAMDADAQENALVSYSLVERRVGERLLSSYVSVHAESGKVFALQPLDHEELELLRFQVSARDAGVPALGSNVTLQVFVLDENDNAPTLLEPEAGVSGGIVSRLVSRSVGAGHVVAKVRAVDADSGYNAWLSYELQSSEGNSRSLFRVGLYTGEISTTRILDEADSPRQRLLVLVKDHGDPAMIVTATVLVSLVENGPVPKAPSRVSTSVTHSEASLVDVNVYLIIAICAVSSLLVLTLLLYTALRCSTVPSESVCGPPKPVMVCSSAVGSWSYSQQRRQRVCSGEYPPKTDLMAFSPSLSDSRDREDQLQSAEDSSGKPRQPNPDWRYSASLRAGMHSSVHLEEAGILRAGPGGPDQQWPTVSSATPEPEAGEVSPPVGAGVNSNSWTFKYGPGNPKQSGPGELPDKFIIPGSPAIISIRQEPANNQIDKSDFITFGKKEETKKKKKKKKGNKTQEKKEKGNSTTDNSDQ</sequence>
<proteinExistence type="evidence at protein level"/>
<accession>O88689</accession>
<accession>Q3UEX3</accession>
<accession>Q6PAM9</accession>
<accession>Q8K487</accession>
<accession>Q8K489</accession>
<dbReference type="EMBL" id="D86916">
    <property type="protein sequence ID" value="BAA29045.1"/>
    <property type="molecule type" value="mRNA"/>
</dbReference>
<dbReference type="EMBL" id="AY013762">
    <property type="protein sequence ID" value="AAK26051.1"/>
    <property type="molecule type" value="mRNA"/>
</dbReference>
<dbReference type="EMBL" id="AF464178">
    <property type="protein sequence ID" value="AAM93577.1"/>
    <property type="molecule type" value="Genomic_DNA"/>
</dbReference>
<dbReference type="EMBL" id="AF464180">
    <property type="protein sequence ID" value="AAM93579.1"/>
    <property type="molecule type" value="mRNA"/>
</dbReference>
<dbReference type="EMBL" id="BC060211">
    <property type="protein sequence ID" value="AAH60211.1"/>
    <property type="molecule type" value="mRNA"/>
</dbReference>
<dbReference type="EMBL" id="AK149282">
    <property type="protein sequence ID" value="BAE28788.1"/>
    <property type="molecule type" value="mRNA"/>
</dbReference>
<dbReference type="CCDS" id="CCDS37776.1">
    <molecule id="O88689-1"/>
</dbReference>
<dbReference type="RefSeq" id="NP_001167625.1">
    <molecule id="O88689-3"/>
    <property type="nucleotide sequence ID" value="NM_001174154.2"/>
</dbReference>
<dbReference type="RefSeq" id="NP_031792.1">
    <molecule id="O88689-1"/>
    <property type="nucleotide sequence ID" value="NM_007766.3"/>
</dbReference>
<dbReference type="PDB" id="1WUZ">
    <property type="method" value="NMR"/>
    <property type="chains" value="A=27-129"/>
</dbReference>
<dbReference type="PDB" id="5DZW">
    <property type="method" value="X-ray"/>
    <property type="resolution" value="2.43 A"/>
    <property type="chains" value="A=30-450"/>
</dbReference>
<dbReference type="PDBsum" id="1WUZ"/>
<dbReference type="PDBsum" id="5DZW"/>
<dbReference type="SMR" id="O88689"/>
<dbReference type="BioGRID" id="198893">
    <property type="interactions" value="5"/>
</dbReference>
<dbReference type="CORUM" id="O88689"/>
<dbReference type="DIP" id="DIP-41020N"/>
<dbReference type="FunCoup" id="O88689">
    <property type="interactions" value="97"/>
</dbReference>
<dbReference type="IntAct" id="O88689">
    <property type="interactions" value="2"/>
</dbReference>
<dbReference type="STRING" id="10090.ENSMUSP00000141408"/>
<dbReference type="GlyCosmos" id="O88689">
    <property type="glycosylation" value="6 sites, No reported glycans"/>
</dbReference>
<dbReference type="GlyGen" id="O88689">
    <property type="glycosylation" value="6 sites, 1 N-linked glycan (1 site)"/>
</dbReference>
<dbReference type="iPTMnet" id="O88689"/>
<dbReference type="PhosphoSitePlus" id="O88689"/>
<dbReference type="PeptideAtlas" id="O88689"/>
<dbReference type="ProteomicsDB" id="289318">
    <molecule id="O88689-1"/>
</dbReference>
<dbReference type="ProteomicsDB" id="289319">
    <molecule id="O88689-2"/>
</dbReference>
<dbReference type="ProteomicsDB" id="289320">
    <molecule id="O88689-3"/>
</dbReference>
<dbReference type="DNASU" id="12936"/>
<dbReference type="Ensembl" id="ENSMUST00000115661.5">
    <molecule id="O88689-3"/>
    <property type="protein sequence ID" value="ENSMUSP00000111325.4"/>
    <property type="gene ID" value="ENSMUSG00000103458.2"/>
</dbReference>
<dbReference type="Ensembl" id="ENSMUST00000192295.2">
    <molecule id="O88689-2"/>
    <property type="protein sequence ID" value="ENSMUSP00000142103.2"/>
    <property type="gene ID" value="ENSMUSG00000104252.6"/>
</dbReference>
<dbReference type="Ensembl" id="ENSMUST00000192512.6">
    <molecule id="O88689-1"/>
    <property type="protein sequence ID" value="ENSMUSP00000141408.2"/>
    <property type="gene ID" value="ENSMUSG00000104252.6"/>
</dbReference>
<dbReference type="GeneID" id="100384868"/>
<dbReference type="GeneID" id="12936"/>
<dbReference type="KEGG" id="mmu:100384868"/>
<dbReference type="KEGG" id="mmu:12936"/>
<dbReference type="UCSC" id="uc008eox.3">
    <molecule id="O88689-1"/>
    <property type="organism name" value="mouse"/>
</dbReference>
<dbReference type="UCSC" id="uc008eoy.2">
    <molecule id="O88689-3"/>
    <property type="organism name" value="mouse"/>
</dbReference>
<dbReference type="AGR" id="MGI:1298406"/>
<dbReference type="CTD" id="100384868"/>
<dbReference type="CTD" id="56144"/>
<dbReference type="MGI" id="MGI:1298406">
    <property type="gene designation" value="Pcdha4"/>
</dbReference>
<dbReference type="VEuPathDB" id="HostDB:ENSMUSG00000103458"/>
<dbReference type="VEuPathDB" id="HostDB:ENSMUSG00000104252"/>
<dbReference type="GeneTree" id="ENSGT00940000163846"/>
<dbReference type="HOGENOM" id="CLU_006480_0_0_1"/>
<dbReference type="InParanoid" id="O88689"/>
<dbReference type="OMA" id="FRMMSQG"/>
<dbReference type="OrthoDB" id="62789at9989"/>
<dbReference type="BioGRID-ORCS" id="100384868">
    <property type="hits" value="2 hits in 15 CRISPR screens"/>
</dbReference>
<dbReference type="BioGRID-ORCS" id="12936">
    <property type="hits" value="1 hit in 39 CRISPR screens"/>
</dbReference>
<dbReference type="EvolutionaryTrace" id="O88689"/>
<dbReference type="PRO" id="PR:O88689"/>
<dbReference type="Proteomes" id="UP000000589">
    <property type="component" value="Chromosome 18"/>
</dbReference>
<dbReference type="RNAct" id="O88689">
    <property type="molecule type" value="protein"/>
</dbReference>
<dbReference type="Bgee" id="ENSMUSG00000103458">
    <property type="expression patterns" value="Expressed in mesodermal cell in embryo and 6 other cell types or tissues"/>
</dbReference>
<dbReference type="GO" id="GO:0005783">
    <property type="term" value="C:endoplasmic reticulum"/>
    <property type="evidence" value="ECO:0000314"/>
    <property type="project" value="MGI"/>
</dbReference>
<dbReference type="GO" id="GO:0016020">
    <property type="term" value="C:membrane"/>
    <property type="evidence" value="ECO:0000314"/>
    <property type="project" value="MGI"/>
</dbReference>
<dbReference type="GO" id="GO:0005886">
    <property type="term" value="C:plasma membrane"/>
    <property type="evidence" value="ECO:0007669"/>
    <property type="project" value="UniProtKB-SubCell"/>
</dbReference>
<dbReference type="GO" id="GO:0045202">
    <property type="term" value="C:synapse"/>
    <property type="evidence" value="ECO:0000314"/>
    <property type="project" value="MGI"/>
</dbReference>
<dbReference type="GO" id="GO:0005509">
    <property type="term" value="F:calcium ion binding"/>
    <property type="evidence" value="ECO:0000314"/>
    <property type="project" value="UniProtKB"/>
</dbReference>
<dbReference type="GO" id="GO:0042802">
    <property type="term" value="F:identical protein binding"/>
    <property type="evidence" value="ECO:0000314"/>
    <property type="project" value="UniProtKB"/>
</dbReference>
<dbReference type="GO" id="GO:0007156">
    <property type="term" value="P:homophilic cell adhesion via plasma membrane adhesion molecules"/>
    <property type="evidence" value="ECO:0000305"/>
    <property type="project" value="UniProtKB"/>
</dbReference>
<dbReference type="CDD" id="cd11304">
    <property type="entry name" value="Cadherin_repeat"/>
    <property type="match status" value="6"/>
</dbReference>
<dbReference type="FunFam" id="2.60.40.60:FF:000001">
    <property type="entry name" value="Protocadherin alpha 2"/>
    <property type="match status" value="1"/>
</dbReference>
<dbReference type="FunFam" id="2.60.40.60:FF:000002">
    <property type="entry name" value="Protocadherin alpha 2"/>
    <property type="match status" value="1"/>
</dbReference>
<dbReference type="FunFam" id="2.60.40.60:FF:000003">
    <property type="entry name" value="Protocadherin alpha 2"/>
    <property type="match status" value="1"/>
</dbReference>
<dbReference type="FunFam" id="2.60.40.60:FF:000006">
    <property type="entry name" value="Protocadherin alpha 2"/>
    <property type="match status" value="1"/>
</dbReference>
<dbReference type="FunFam" id="2.60.40.60:FF:000007">
    <property type="entry name" value="Protocadherin alpha 2"/>
    <property type="match status" value="1"/>
</dbReference>
<dbReference type="FunFam" id="2.60.40.60:FF:000076">
    <property type="entry name" value="Protocadherin alpha 2"/>
    <property type="match status" value="1"/>
</dbReference>
<dbReference type="Gene3D" id="2.60.40.60">
    <property type="entry name" value="Cadherins"/>
    <property type="match status" value="6"/>
</dbReference>
<dbReference type="InterPro" id="IPR002126">
    <property type="entry name" value="Cadherin-like_dom"/>
</dbReference>
<dbReference type="InterPro" id="IPR015919">
    <property type="entry name" value="Cadherin-like_sf"/>
</dbReference>
<dbReference type="InterPro" id="IPR031904">
    <property type="entry name" value="Cadherin_CBD"/>
</dbReference>
<dbReference type="InterPro" id="IPR020894">
    <property type="entry name" value="Cadherin_CS"/>
</dbReference>
<dbReference type="InterPro" id="IPR013164">
    <property type="entry name" value="Cadherin_N"/>
</dbReference>
<dbReference type="InterPro" id="IPR050174">
    <property type="entry name" value="Protocadherin/Cadherin-CA"/>
</dbReference>
<dbReference type="PANTHER" id="PTHR24028">
    <property type="entry name" value="CADHERIN-87A"/>
    <property type="match status" value="1"/>
</dbReference>
<dbReference type="PANTHER" id="PTHR24028:SF133">
    <property type="entry name" value="PROTOCADHERIN ALPHA-4"/>
    <property type="match status" value="1"/>
</dbReference>
<dbReference type="Pfam" id="PF00028">
    <property type="entry name" value="Cadherin"/>
    <property type="match status" value="5"/>
</dbReference>
<dbReference type="Pfam" id="PF08266">
    <property type="entry name" value="Cadherin_2"/>
    <property type="match status" value="1"/>
</dbReference>
<dbReference type="Pfam" id="PF15974">
    <property type="entry name" value="Cadherin_tail"/>
    <property type="match status" value="1"/>
</dbReference>
<dbReference type="PRINTS" id="PR00205">
    <property type="entry name" value="CADHERIN"/>
</dbReference>
<dbReference type="SMART" id="SM00112">
    <property type="entry name" value="CA"/>
    <property type="match status" value="6"/>
</dbReference>
<dbReference type="SUPFAM" id="SSF49313">
    <property type="entry name" value="Cadherin-like"/>
    <property type="match status" value="6"/>
</dbReference>
<dbReference type="PROSITE" id="PS00232">
    <property type="entry name" value="CADHERIN_1"/>
    <property type="match status" value="5"/>
</dbReference>
<dbReference type="PROSITE" id="PS50268">
    <property type="entry name" value="CADHERIN_2"/>
    <property type="match status" value="6"/>
</dbReference>
<organism>
    <name type="scientific">Mus musculus</name>
    <name type="common">Mouse</name>
    <dbReference type="NCBI Taxonomy" id="10090"/>
    <lineage>
        <taxon>Eukaryota</taxon>
        <taxon>Metazoa</taxon>
        <taxon>Chordata</taxon>
        <taxon>Craniata</taxon>
        <taxon>Vertebrata</taxon>
        <taxon>Euteleostomi</taxon>
        <taxon>Mammalia</taxon>
        <taxon>Eutheria</taxon>
        <taxon>Euarchontoglires</taxon>
        <taxon>Glires</taxon>
        <taxon>Rodentia</taxon>
        <taxon>Myomorpha</taxon>
        <taxon>Muroidea</taxon>
        <taxon>Muridae</taxon>
        <taxon>Murinae</taxon>
        <taxon>Mus</taxon>
        <taxon>Mus</taxon>
    </lineage>
</organism>
<reference key="1">
    <citation type="journal article" date="1998" name="Neuron">
        <title>Diversity revealed by a novel family of cadherins expressed in neurons at a synaptic complex.</title>
        <authorList>
            <person name="Kohmura N."/>
            <person name="Senzaki K."/>
            <person name="Hamada S."/>
            <person name="Kai N."/>
            <person name="Yasuda R."/>
            <person name="Watanabe M."/>
            <person name="Ishii H."/>
            <person name="Yasuda M."/>
            <person name="Mishina M."/>
            <person name="Yagi T."/>
        </authorList>
    </citation>
    <scope>NUCLEOTIDE SEQUENCE [MRNA] (ISOFORM 1)</scope>
    <scope>INTERACTION WITH FYN</scope>
    <scope>SUBCELLULAR LOCATION</scope>
    <scope>TOPOLOGY</scope>
    <scope>TISSUE SPECIFICITY</scope>
    <scope>REGION</scope>
    <source>
        <strain>C57BL/6J</strain>
        <tissue>Brain</tissue>
    </source>
</reference>
<reference key="2">
    <citation type="journal article" date="2001" name="Genome Res.">
        <title>Comparative DNA sequence analysis of mouse and human protocadherin gene clusters.</title>
        <authorList>
            <person name="Wu Q."/>
            <person name="Zhang T."/>
            <person name="Cheng J.-F."/>
            <person name="Kim Y."/>
            <person name="Grimwood J."/>
            <person name="Schmutz J."/>
            <person name="Dickson M."/>
            <person name="Noonan J.P."/>
            <person name="Zhang M.Q."/>
            <person name="Myers R.M."/>
            <person name="Maniatis T."/>
        </authorList>
    </citation>
    <scope>NUCLEOTIDE SEQUENCE [MRNA] (ISOFORM 1)</scope>
    <source>
        <tissue>Brain</tissue>
    </source>
</reference>
<reference key="3">
    <citation type="journal article" date="2002" name="Genes Dev.">
        <title>Molecular mechanisms governing Pcdh-gamma gene expression: evidence for a multiple promoter and cis-alternative splicing model.</title>
        <authorList>
            <person name="Wang X."/>
            <person name="Su H."/>
            <person name="Bradley A."/>
        </authorList>
    </citation>
    <scope>NUCLEOTIDE SEQUENCE [GENOMIC DNA / MRNA] (ISOFORM 3)</scope>
    <source>
        <strain>C57BL/6J</strain>
    </source>
</reference>
<reference key="4">
    <citation type="journal article" date="2004" name="Genome Res.">
        <title>The status, quality, and expansion of the NIH full-length cDNA project: the Mammalian Gene Collection (MGC).</title>
        <authorList>
            <consortium name="The MGC Project Team"/>
        </authorList>
    </citation>
    <scope>NUCLEOTIDE SEQUENCE [LARGE SCALE MRNA] (ISOFORM 2)</scope>
    <source>
        <strain>C57BL/6J</strain>
        <tissue>Brain</tissue>
    </source>
</reference>
<reference key="5">
    <citation type="journal article" date="2005" name="Science">
        <title>The transcriptional landscape of the mammalian genome.</title>
        <authorList>
            <person name="Carninci P."/>
            <person name="Kasukawa T."/>
            <person name="Katayama S."/>
            <person name="Gough J."/>
            <person name="Frith M.C."/>
            <person name="Maeda N."/>
            <person name="Oyama R."/>
            <person name="Ravasi T."/>
            <person name="Lenhard B."/>
            <person name="Wells C."/>
            <person name="Kodzius R."/>
            <person name="Shimokawa K."/>
            <person name="Bajic V.B."/>
            <person name="Brenner S.E."/>
            <person name="Batalov S."/>
            <person name="Forrest A.R."/>
            <person name="Zavolan M."/>
            <person name="Davis M.J."/>
            <person name="Wilming L.G."/>
            <person name="Aidinis V."/>
            <person name="Allen J.E."/>
            <person name="Ambesi-Impiombato A."/>
            <person name="Apweiler R."/>
            <person name="Aturaliya R.N."/>
            <person name="Bailey T.L."/>
            <person name="Bansal M."/>
            <person name="Baxter L."/>
            <person name="Beisel K.W."/>
            <person name="Bersano T."/>
            <person name="Bono H."/>
            <person name="Chalk A.M."/>
            <person name="Chiu K.P."/>
            <person name="Choudhary V."/>
            <person name="Christoffels A."/>
            <person name="Clutterbuck D.R."/>
            <person name="Crowe M.L."/>
            <person name="Dalla E."/>
            <person name="Dalrymple B.P."/>
            <person name="de Bono B."/>
            <person name="Della Gatta G."/>
            <person name="di Bernardo D."/>
            <person name="Down T."/>
            <person name="Engstrom P."/>
            <person name="Fagiolini M."/>
            <person name="Faulkner G."/>
            <person name="Fletcher C.F."/>
            <person name="Fukushima T."/>
            <person name="Furuno M."/>
            <person name="Futaki S."/>
            <person name="Gariboldi M."/>
            <person name="Georgii-Hemming P."/>
            <person name="Gingeras T.R."/>
            <person name="Gojobori T."/>
            <person name="Green R.E."/>
            <person name="Gustincich S."/>
            <person name="Harbers M."/>
            <person name="Hayashi Y."/>
            <person name="Hensch T.K."/>
            <person name="Hirokawa N."/>
            <person name="Hill D."/>
            <person name="Huminiecki L."/>
            <person name="Iacono M."/>
            <person name="Ikeo K."/>
            <person name="Iwama A."/>
            <person name="Ishikawa T."/>
            <person name="Jakt M."/>
            <person name="Kanapin A."/>
            <person name="Katoh M."/>
            <person name="Kawasawa Y."/>
            <person name="Kelso J."/>
            <person name="Kitamura H."/>
            <person name="Kitano H."/>
            <person name="Kollias G."/>
            <person name="Krishnan S.P."/>
            <person name="Kruger A."/>
            <person name="Kummerfeld S.K."/>
            <person name="Kurochkin I.V."/>
            <person name="Lareau L.F."/>
            <person name="Lazarevic D."/>
            <person name="Lipovich L."/>
            <person name="Liu J."/>
            <person name="Liuni S."/>
            <person name="McWilliam S."/>
            <person name="Madan Babu M."/>
            <person name="Madera M."/>
            <person name="Marchionni L."/>
            <person name="Matsuda H."/>
            <person name="Matsuzawa S."/>
            <person name="Miki H."/>
            <person name="Mignone F."/>
            <person name="Miyake S."/>
            <person name="Morris K."/>
            <person name="Mottagui-Tabar S."/>
            <person name="Mulder N."/>
            <person name="Nakano N."/>
            <person name="Nakauchi H."/>
            <person name="Ng P."/>
            <person name="Nilsson R."/>
            <person name="Nishiguchi S."/>
            <person name="Nishikawa S."/>
            <person name="Nori F."/>
            <person name="Ohara O."/>
            <person name="Okazaki Y."/>
            <person name="Orlando V."/>
            <person name="Pang K.C."/>
            <person name="Pavan W.J."/>
            <person name="Pavesi G."/>
            <person name="Pesole G."/>
            <person name="Petrovsky N."/>
            <person name="Piazza S."/>
            <person name="Reed J."/>
            <person name="Reid J.F."/>
            <person name="Ring B.Z."/>
            <person name="Ringwald M."/>
            <person name="Rost B."/>
            <person name="Ruan Y."/>
            <person name="Salzberg S.L."/>
            <person name="Sandelin A."/>
            <person name="Schneider C."/>
            <person name="Schoenbach C."/>
            <person name="Sekiguchi K."/>
            <person name="Semple C.A."/>
            <person name="Seno S."/>
            <person name="Sessa L."/>
            <person name="Sheng Y."/>
            <person name="Shibata Y."/>
            <person name="Shimada H."/>
            <person name="Shimada K."/>
            <person name="Silva D."/>
            <person name="Sinclair B."/>
            <person name="Sperling S."/>
            <person name="Stupka E."/>
            <person name="Sugiura K."/>
            <person name="Sultana R."/>
            <person name="Takenaka Y."/>
            <person name="Taki K."/>
            <person name="Tammoja K."/>
            <person name="Tan S.L."/>
            <person name="Tang S."/>
            <person name="Taylor M.S."/>
            <person name="Tegner J."/>
            <person name="Teichmann S.A."/>
            <person name="Ueda H.R."/>
            <person name="van Nimwegen E."/>
            <person name="Verardo R."/>
            <person name="Wei C.L."/>
            <person name="Yagi K."/>
            <person name="Yamanishi H."/>
            <person name="Zabarovsky E."/>
            <person name="Zhu S."/>
            <person name="Zimmer A."/>
            <person name="Hide W."/>
            <person name="Bult C."/>
            <person name="Grimmond S.M."/>
            <person name="Teasdale R.D."/>
            <person name="Liu E.T."/>
            <person name="Brusic V."/>
            <person name="Quackenbush J."/>
            <person name="Wahlestedt C."/>
            <person name="Mattick J.S."/>
            <person name="Hume D.A."/>
            <person name="Kai C."/>
            <person name="Sasaki D."/>
            <person name="Tomaru Y."/>
            <person name="Fukuda S."/>
            <person name="Kanamori-Katayama M."/>
            <person name="Suzuki M."/>
            <person name="Aoki J."/>
            <person name="Arakawa T."/>
            <person name="Iida J."/>
            <person name="Imamura K."/>
            <person name="Itoh M."/>
            <person name="Kato T."/>
            <person name="Kawaji H."/>
            <person name="Kawagashira N."/>
            <person name="Kawashima T."/>
            <person name="Kojima M."/>
            <person name="Kondo S."/>
            <person name="Konno H."/>
            <person name="Nakano K."/>
            <person name="Ninomiya N."/>
            <person name="Nishio T."/>
            <person name="Okada M."/>
            <person name="Plessy C."/>
            <person name="Shibata K."/>
            <person name="Shiraki T."/>
            <person name="Suzuki S."/>
            <person name="Tagami M."/>
            <person name="Waki K."/>
            <person name="Watahiki A."/>
            <person name="Okamura-Oho Y."/>
            <person name="Suzuki H."/>
            <person name="Kawai J."/>
            <person name="Hayashizaki Y."/>
        </authorList>
    </citation>
    <scope>NUCLEOTIDE SEQUENCE [LARGE SCALE MRNA] OF 1-919 (ISOFORM 1)</scope>
    <source>
        <strain>C57BL/6J</strain>
        <tissue>Retina</tissue>
    </source>
</reference>
<reference key="6">
    <citation type="journal article" date="2005" name="J. Biomol. NMR">
        <title>1H, 13C and 15N resonance assignments of the first cadherin domain of cadherin-related neuronal receptor (CNR)/protocadherin alpha.</title>
        <authorList>
            <person name="Umitsu M."/>
            <person name="Morishita H."/>
            <person name="Murata Y."/>
            <person name="Udaka K."/>
            <person name="Akutsu H."/>
            <person name="Yagi T."/>
            <person name="Ikegami T."/>
        </authorList>
    </citation>
    <scope>STRUCTURE BY NMR OF 27-129</scope>
    <scope>DISULFIDE BONDS</scope>
</reference>
<reference key="7">
    <citation type="journal article" date="2016" name="Neuron">
        <title>Structural basis of diverse homophilic recognition by clustered alpha- and beta-protocadherins.</title>
        <authorList>
            <person name="Goodman K.M."/>
            <person name="Rubinstein R."/>
            <person name="Thu C.A."/>
            <person name="Bahna F."/>
            <person name="Mannepalli S."/>
            <person name="Ahlsen G."/>
            <person name="Rittenhouse C."/>
            <person name="Maniatis T."/>
            <person name="Honig B."/>
            <person name="Shapiro L."/>
        </authorList>
    </citation>
    <scope>X-RAY CRYSTALLOGRAPHY (2.43 ANGSTROMS) OF 30-450 OF HOMODIMER IN COMPLEX WITH CALCIUM</scope>
    <scope>FUNCTION</scope>
    <scope>SUBUNIT</scope>
    <scope>TOPOLOGY</scope>
    <scope>DOMAIN</scope>
    <scope>GLYCOSYLATION AT ASN-265; THR-438; SER-440 AND SER-442</scope>
    <scope>DISULFIDE BONDS</scope>
</reference>
<protein>
    <recommendedName>
        <fullName evidence="11">Protocadherin alpha-4</fullName>
        <shortName evidence="11">PCDH-alpha-4</shortName>
    </recommendedName>
</protein>
<gene>
    <name evidence="14" type="primary">Pcdha4</name>
    <name type="synonym">Cnr1</name>
</gene>
<keyword id="KW-0002">3D-structure</keyword>
<keyword id="KW-0025">Alternative splicing</keyword>
<keyword id="KW-0106">Calcium</keyword>
<keyword id="KW-0130">Cell adhesion</keyword>
<keyword id="KW-1003">Cell membrane</keyword>
<keyword id="KW-1015">Disulfide bond</keyword>
<keyword id="KW-0325">Glycoprotein</keyword>
<keyword id="KW-0472">Membrane</keyword>
<keyword id="KW-0479">Metal-binding</keyword>
<keyword id="KW-1185">Reference proteome</keyword>
<keyword id="KW-0677">Repeat</keyword>
<keyword id="KW-0732">Signal</keyword>
<keyword id="KW-0812">Transmembrane</keyword>
<keyword id="KW-1133">Transmembrane helix</keyword>
<comment type="function">
    <text evidence="12">Calcium-dependent cell-adhesion protein involved in cells self-recognition and non-self discrimination (Probable). Thereby, it is involved in the establishment and maintenance of specific neuronal connections in the brain (PubMed:27161523).</text>
</comment>
<comment type="subunit">
    <text evidence="6 7">Forms homodimers in trans (molecules expressed by two different cells) (PubMed:27161523). Forms promiscuous heterodimers in cis (at the plasma membrane of the same cell) with other protocadherins (PubMed:27161523). Interacts with FYN (PubMed:9655502).</text>
</comment>
<comment type="interaction">
    <interactant intactId="EBI-15880299">
        <id>O88689-1</id>
    </interactant>
    <interactant intactId="EBI-2119135">
        <id>Q99LI8</id>
        <label>Hgs</label>
    </interactant>
    <organismsDiffer>false</organismsDiffer>
    <experiments>2</experiments>
</comment>
<comment type="subcellular location">
    <subcellularLocation>
        <location evidence="7">Cell membrane</location>
        <topology evidence="12 13">Single-pass type I membrane protein</topology>
    </subcellularLocation>
    <text evidence="7">Detected in dendrites and synapses.</text>
</comment>
<comment type="alternative products">
    <event type="alternative splicing"/>
    <isoform>
        <id>O88689-1</id>
        <name>1</name>
        <sequence type="displayed"/>
    </isoform>
    <isoform>
        <id>O88689-2</id>
        <name>2</name>
        <sequence type="described" ref="VSP_019413 VSP_019415"/>
    </isoform>
    <isoform>
        <id>O88689-3</id>
        <name>3</name>
        <sequence type="described" ref="VSP_019414"/>
    </isoform>
</comment>
<comment type="tissue specificity">
    <text evidence="7">Detected in brain throughout embryonic development. Detected in adult brain, in particular in cerebellum and forebrain.</text>
</comment>
<comment type="domain">
    <text evidence="6 16">Cadherin 1 to cadherin 4 domains mediate homophilic trans-interaction, the interaction with an identical protocadherin expressed by a neighboring cell (PubMed:27161523). This is a head-to-tail interaction, the cadherin 1 domain interacting with the cadherin 4 domain and the cadherin 2 domain interacting the cadherin 3 domain of the other protocadherin (PubMed:27161523). The cadherin 6 domain mediates promiscuous interactions with protocadherins on the same cell membrane (PubMed:27161523). Each cadherin domain binds three calcium ions (PubMed:27161523).</text>
</comment>
<comment type="miscellaneous">
    <text evidence="8">The protocadherins alpha are expressed from a single gene cluster similarly to immunoglobulin and T-cell receptors. The N-terminal region containing the 6 extracellular cadherin domains, unique to each protocadherin alpha, is encoded by one of the large exons found in tandem array within the gene cluster. The C-terminal region, identical to all protocadherins alpha, is encoded by 3 shared exons.</text>
</comment>
<evidence type="ECO:0000255" key="1"/>
<evidence type="ECO:0000255" key="2">
    <source>
        <dbReference type="PROSITE-ProRule" id="PRU00043"/>
    </source>
</evidence>
<evidence type="ECO:0000255" key="3">
    <source>
        <dbReference type="PROSITE-ProRule" id="PRU00498"/>
    </source>
</evidence>
<evidence type="ECO:0000256" key="4">
    <source>
        <dbReference type="SAM" id="MobiDB-lite"/>
    </source>
</evidence>
<evidence type="ECO:0000269" key="5">
    <source>
    </source>
</evidence>
<evidence type="ECO:0000269" key="6">
    <source>
    </source>
</evidence>
<evidence type="ECO:0000269" key="7">
    <source>
    </source>
</evidence>
<evidence type="ECO:0000303" key="8">
    <source>
    </source>
</evidence>
<evidence type="ECO:0000303" key="9">
    <source>
    </source>
</evidence>
<evidence type="ECO:0000303" key="10">
    <source>
    </source>
</evidence>
<evidence type="ECO:0000305" key="11"/>
<evidence type="ECO:0000305" key="12">
    <source>
    </source>
</evidence>
<evidence type="ECO:0000305" key="13">
    <source>
    </source>
</evidence>
<evidence type="ECO:0000312" key="14">
    <source>
        <dbReference type="MGI" id="MGI:1298406"/>
    </source>
</evidence>
<evidence type="ECO:0000312" key="15">
    <source>
        <dbReference type="PDB" id="1WUZ"/>
    </source>
</evidence>
<evidence type="ECO:0000312" key="16">
    <source>
        <dbReference type="PDB" id="5DZW"/>
    </source>
</evidence>
<evidence type="ECO:0007829" key="17">
    <source>
        <dbReference type="PDB" id="1WUZ"/>
    </source>
</evidence>
<evidence type="ECO:0007829" key="18">
    <source>
        <dbReference type="PDB" id="5DZW"/>
    </source>
</evidence>